<feature type="chain" id="PRO_0000193893" description="Probable phosphoketolase">
    <location>
        <begin position="1"/>
        <end position="796"/>
    </location>
</feature>
<keyword id="KW-0456">Lyase</keyword>
<keyword id="KW-0786">Thiamine pyrophosphate</keyword>
<evidence type="ECO:0000255" key="1">
    <source>
        <dbReference type="HAMAP-Rule" id="MF_01403"/>
    </source>
</evidence>
<dbReference type="EC" id="4.1.2.-" evidence="1"/>
<dbReference type="EMBL" id="AP008231">
    <property type="protein sequence ID" value="BAD80203.1"/>
    <property type="molecule type" value="Genomic_DNA"/>
</dbReference>
<dbReference type="RefSeq" id="WP_011244323.1">
    <property type="nucleotide sequence ID" value="NZ_CP085785.1"/>
</dbReference>
<dbReference type="SMR" id="Q5N0G7"/>
<dbReference type="KEGG" id="syc:syc2013_c"/>
<dbReference type="eggNOG" id="COG3957">
    <property type="taxonomic scope" value="Bacteria"/>
</dbReference>
<dbReference type="Proteomes" id="UP000001175">
    <property type="component" value="Chromosome"/>
</dbReference>
<dbReference type="GO" id="GO:0016832">
    <property type="term" value="F:aldehyde-lyase activity"/>
    <property type="evidence" value="ECO:0007669"/>
    <property type="project" value="UniProtKB-UniRule"/>
</dbReference>
<dbReference type="GO" id="GO:0005975">
    <property type="term" value="P:carbohydrate metabolic process"/>
    <property type="evidence" value="ECO:0007669"/>
    <property type="project" value="InterPro"/>
</dbReference>
<dbReference type="CDD" id="cd02011">
    <property type="entry name" value="TPP_PK"/>
    <property type="match status" value="1"/>
</dbReference>
<dbReference type="FunFam" id="3.40.50.970:FF:000091">
    <property type="entry name" value="Xylulose-5-phosphate/fructose-6-phosphate phosphoketolase"/>
    <property type="match status" value="1"/>
</dbReference>
<dbReference type="Gene3D" id="3.40.50.920">
    <property type="match status" value="1"/>
</dbReference>
<dbReference type="Gene3D" id="3.40.50.970">
    <property type="match status" value="2"/>
</dbReference>
<dbReference type="HAMAP" id="MF_01403">
    <property type="entry name" value="Phosphoketolase"/>
    <property type="match status" value="1"/>
</dbReference>
<dbReference type="InterPro" id="IPR023962">
    <property type="entry name" value="Phosphoketolase"/>
</dbReference>
<dbReference type="InterPro" id="IPR029061">
    <property type="entry name" value="THDP-binding"/>
</dbReference>
<dbReference type="InterPro" id="IPR009014">
    <property type="entry name" value="Transketo_C/PFOR_II"/>
</dbReference>
<dbReference type="InterPro" id="IPR005593">
    <property type="entry name" value="Xul5P/Fru6P_PKetolase"/>
</dbReference>
<dbReference type="InterPro" id="IPR018969">
    <property type="entry name" value="Xul5P/Fru6P_PKetolase_C"/>
</dbReference>
<dbReference type="InterPro" id="IPR019790">
    <property type="entry name" value="Xul5P/Fru6P_PKetolase_CS"/>
</dbReference>
<dbReference type="InterPro" id="IPR018970">
    <property type="entry name" value="Xul5P/Fru6P_PKetolase_N"/>
</dbReference>
<dbReference type="InterPro" id="IPR019789">
    <property type="entry name" value="Xul5P/Fru6P_PKetolase_ThDP_BS"/>
</dbReference>
<dbReference type="NCBIfam" id="NF003617">
    <property type="entry name" value="PRK05261.1-2"/>
    <property type="match status" value="1"/>
</dbReference>
<dbReference type="NCBIfam" id="NF003619">
    <property type="entry name" value="PRK05261.1-4"/>
    <property type="match status" value="1"/>
</dbReference>
<dbReference type="PANTHER" id="PTHR31273">
    <property type="entry name" value="PHOSPHOKETOLASE-RELATED"/>
    <property type="match status" value="1"/>
</dbReference>
<dbReference type="PANTHER" id="PTHR31273:SF0">
    <property type="entry name" value="PHOSPHOKETOLASE-RELATED"/>
    <property type="match status" value="1"/>
</dbReference>
<dbReference type="Pfam" id="PF03894">
    <property type="entry name" value="XFP"/>
    <property type="match status" value="1"/>
</dbReference>
<dbReference type="Pfam" id="PF09363">
    <property type="entry name" value="XFP_C"/>
    <property type="match status" value="1"/>
</dbReference>
<dbReference type="Pfam" id="PF09364">
    <property type="entry name" value="XFP_N"/>
    <property type="match status" value="1"/>
</dbReference>
<dbReference type="PIRSF" id="PIRSF017245">
    <property type="entry name" value="Phosphoketolase"/>
    <property type="match status" value="1"/>
</dbReference>
<dbReference type="SUPFAM" id="SSF52518">
    <property type="entry name" value="Thiamin diphosphate-binding fold (THDP-binding)"/>
    <property type="match status" value="2"/>
</dbReference>
<dbReference type="PROSITE" id="PS60002">
    <property type="entry name" value="PHOSPHOKETOLASE_1"/>
    <property type="match status" value="1"/>
</dbReference>
<dbReference type="PROSITE" id="PS60003">
    <property type="entry name" value="PHOSPHOKETOLASE_2"/>
    <property type="match status" value="1"/>
</dbReference>
<name>PHK_SYNP6</name>
<reference key="1">
    <citation type="journal article" date="2007" name="Photosyn. Res.">
        <title>Complete nucleotide sequence of the freshwater unicellular cyanobacterium Synechococcus elongatus PCC 6301 chromosome: gene content and organization.</title>
        <authorList>
            <person name="Sugita C."/>
            <person name="Ogata K."/>
            <person name="Shikata M."/>
            <person name="Jikuya H."/>
            <person name="Takano J."/>
            <person name="Furumichi M."/>
            <person name="Kanehisa M."/>
            <person name="Omata T."/>
            <person name="Sugiura M."/>
            <person name="Sugita M."/>
        </authorList>
    </citation>
    <scope>NUCLEOTIDE SEQUENCE [LARGE SCALE GENOMIC DNA]</scope>
    <source>
        <strain>ATCC 27144 / PCC 6301 / SAUG 1402/1</strain>
    </source>
</reference>
<accession>Q5N0G7</accession>
<proteinExistence type="inferred from homology"/>
<gene>
    <name type="ordered locus">syc2013_c</name>
</gene>
<protein>
    <recommendedName>
        <fullName evidence="1">Probable phosphoketolase</fullName>
        <ecNumber evidence="1">4.1.2.-</ecNumber>
    </recommendedName>
</protein>
<sequence length="796" mass="89026">MTSTLQATDIATLSPNEQAAIDAWWRAANYLSVGQIYLRDNPLLQEPLRPEHIKQRLLGHWGSDPGLSFVYVHLNRLIRRLDLNLIYVTGPGHGAPALLANAWLEGTYSEVYPNCQQSTAGLQQFFKQFSFPGGIGSHCTPETPGSIHEGGELGYSLSHAFGAALDNPDLIVACVIGDGEAETGPLATSWHSNKFLNPAQDGAVLPILHLNGYKIANPTLLSRISHEELRSLFIGYGYEPFFVEGNDPAILHGVMASTLATCVQKIQAIQAAARSGESSDRPMWPMIVLRTPKGWTGPATIKGHVVEGSWRSHQVPMADVLTNPEHLQLLEDWLRSYRPEELFDASGAPVAELQAIAPIGDRRMSANPVTNGGLLRRALTLPDFRDQAVSVPAPGKSRADSTRPLGQFLREVIRHNPDNFRLFGPDETASNRLDAVYEVTSKVWLGDRIPEDEDGGHLSDRGRVMEILSEHTLEGWLEAYLLTGRHGFFATYEAFAHVIDSMVNQHAKWLDVSKREVDWRAPVSSLNILLSSTVWRQDHNGFSHQDPGFIDLVTNKSARVTRIYLPPDANCLLSVADHCLRSTDYINVIVADKQSHLQYLDAEAAARHCAKGIGIWDWASNDQGASPDVVIASCGDVVTLEALAATALLREHFPDLKIRFVNVVDLFRLQPDTEHPHGLSDRDFDSLFTVDKPIIFNFHGYPWLIHKLAYRRHNHNNLHVRGYKEVGNINTPLELAIRNQVDRFNLAIDVIDRVPHLRDRGAHVKEWLKDQIHDHIQYAYQEGIDRPEINQWQWPF</sequence>
<comment type="cofactor">
    <cofactor evidence="1">
        <name>thiamine diphosphate</name>
        <dbReference type="ChEBI" id="CHEBI:58937"/>
    </cofactor>
</comment>
<comment type="similarity">
    <text evidence="1">Belongs to the XFP family.</text>
</comment>
<organism>
    <name type="scientific">Synechococcus sp. (strain ATCC 27144 / PCC 6301 / SAUG 1402/1)</name>
    <name type="common">Anacystis nidulans</name>
    <dbReference type="NCBI Taxonomy" id="269084"/>
    <lineage>
        <taxon>Bacteria</taxon>
        <taxon>Bacillati</taxon>
        <taxon>Cyanobacteriota</taxon>
        <taxon>Cyanophyceae</taxon>
        <taxon>Synechococcales</taxon>
        <taxon>Synechococcaceae</taxon>
        <taxon>Synechococcus</taxon>
    </lineage>
</organism>